<gene>
    <name type="primary">ALDOB</name>
</gene>
<sequence length="364" mass="39543">MAHQFPALTSEQKKALSETARRIVANGKGILAADESVGTMGNRLQRIKVENTEENRRQFRELLFTVDSSVSQSIGGVILFHETLYQKDGQGKLFRDILKEKGIVVGIKLDQGVAPLAGTNKETTVQGLDGLSERCAQYKKDGADFGKWRAVLKIDNQCPSHLAIQENANTLARYASICQQNGLVPIVEPEVIPDGSHDMEHCQYVTEKVLAAVYKALNDHHVYLEGTLLKPNMVTAGHACTKKYTPEQVAMATVTALHRTVPAAVPGICFLSGGMSEEDATLNLNAINLCPLPKPWKLSFSYGRALQASALAAWGGKAENKKTTQEAFMKRALANSQAAKGQYVHMGSSGSASTQSLFTASYTY</sequence>
<dbReference type="EC" id="4.1.2.13" evidence="3"/>
<dbReference type="EMBL" id="BC102278">
    <property type="protein sequence ID" value="AAI02279.1"/>
    <property type="molecule type" value="mRNA"/>
</dbReference>
<dbReference type="RefSeq" id="NP_001029657.1">
    <property type="nucleotide sequence ID" value="NM_001034485.2"/>
</dbReference>
<dbReference type="SMR" id="Q3T0S5"/>
<dbReference type="FunCoup" id="Q3T0S5">
    <property type="interactions" value="794"/>
</dbReference>
<dbReference type="STRING" id="9913.ENSBTAP00000054283"/>
<dbReference type="PaxDb" id="9913-ENSBTAP00000054283"/>
<dbReference type="PeptideAtlas" id="Q3T0S5"/>
<dbReference type="GeneID" id="515263"/>
<dbReference type="KEGG" id="bta:515263"/>
<dbReference type="CTD" id="229"/>
<dbReference type="eggNOG" id="KOG1557">
    <property type="taxonomic scope" value="Eukaryota"/>
</dbReference>
<dbReference type="InParanoid" id="Q3T0S5"/>
<dbReference type="OrthoDB" id="36455at2759"/>
<dbReference type="UniPathway" id="UPA00109">
    <property type="reaction ID" value="UER00183"/>
</dbReference>
<dbReference type="UniPathway" id="UPA00138"/>
<dbReference type="UniPathway" id="UPA00202"/>
<dbReference type="Proteomes" id="UP000009136">
    <property type="component" value="Unplaced"/>
</dbReference>
<dbReference type="GO" id="GO:0034451">
    <property type="term" value="C:centriolar satellite"/>
    <property type="evidence" value="ECO:0007669"/>
    <property type="project" value="UniProtKB-SubCell"/>
</dbReference>
<dbReference type="GO" id="GO:0005829">
    <property type="term" value="C:cytosol"/>
    <property type="evidence" value="ECO:0000318"/>
    <property type="project" value="GO_Central"/>
</dbReference>
<dbReference type="GO" id="GO:0061609">
    <property type="term" value="F:fructose-1-phosphate aldolase activity"/>
    <property type="evidence" value="ECO:0000250"/>
    <property type="project" value="UniProtKB"/>
</dbReference>
<dbReference type="GO" id="GO:0004332">
    <property type="term" value="F:fructose-bisphosphate aldolase activity"/>
    <property type="evidence" value="ECO:0000250"/>
    <property type="project" value="UniProtKB"/>
</dbReference>
<dbReference type="GO" id="GO:0030388">
    <property type="term" value="P:fructose 1,6-bisphosphate metabolic process"/>
    <property type="evidence" value="ECO:0000318"/>
    <property type="project" value="GO_Central"/>
</dbReference>
<dbReference type="GO" id="GO:0006000">
    <property type="term" value="P:fructose metabolic process"/>
    <property type="evidence" value="ECO:0007669"/>
    <property type="project" value="UniProtKB-UniPathway"/>
</dbReference>
<dbReference type="GO" id="GO:0006094">
    <property type="term" value="P:gluconeogenesis"/>
    <property type="evidence" value="ECO:0007669"/>
    <property type="project" value="UniProtKB-UniPathway"/>
</dbReference>
<dbReference type="GO" id="GO:0006096">
    <property type="term" value="P:glycolytic process"/>
    <property type="evidence" value="ECO:0000250"/>
    <property type="project" value="UniProtKB"/>
</dbReference>
<dbReference type="CDD" id="cd00948">
    <property type="entry name" value="FBP_aldolase_I_a"/>
    <property type="match status" value="1"/>
</dbReference>
<dbReference type="FunFam" id="3.20.20.70:FF:000021">
    <property type="entry name" value="Fructose-bisphosphate aldolase"/>
    <property type="match status" value="1"/>
</dbReference>
<dbReference type="Gene3D" id="3.20.20.70">
    <property type="entry name" value="Aldolase class I"/>
    <property type="match status" value="1"/>
</dbReference>
<dbReference type="InterPro" id="IPR029768">
    <property type="entry name" value="Aldolase_I_AS"/>
</dbReference>
<dbReference type="InterPro" id="IPR013785">
    <property type="entry name" value="Aldolase_TIM"/>
</dbReference>
<dbReference type="InterPro" id="IPR000741">
    <property type="entry name" value="FBA_I"/>
</dbReference>
<dbReference type="NCBIfam" id="NF033379">
    <property type="entry name" value="FrucBisAld_I"/>
    <property type="match status" value="1"/>
</dbReference>
<dbReference type="PANTHER" id="PTHR11627">
    <property type="entry name" value="FRUCTOSE-BISPHOSPHATE ALDOLASE"/>
    <property type="match status" value="1"/>
</dbReference>
<dbReference type="Pfam" id="PF00274">
    <property type="entry name" value="Glycolytic"/>
    <property type="match status" value="1"/>
</dbReference>
<dbReference type="SUPFAM" id="SSF51569">
    <property type="entry name" value="Aldolase"/>
    <property type="match status" value="1"/>
</dbReference>
<dbReference type="PROSITE" id="PS00158">
    <property type="entry name" value="ALDOLASE_CLASS_I"/>
    <property type="match status" value="1"/>
</dbReference>
<organism>
    <name type="scientific">Bos taurus</name>
    <name type="common">Bovine</name>
    <dbReference type="NCBI Taxonomy" id="9913"/>
    <lineage>
        <taxon>Eukaryota</taxon>
        <taxon>Metazoa</taxon>
        <taxon>Chordata</taxon>
        <taxon>Craniata</taxon>
        <taxon>Vertebrata</taxon>
        <taxon>Euteleostomi</taxon>
        <taxon>Mammalia</taxon>
        <taxon>Eutheria</taxon>
        <taxon>Laurasiatheria</taxon>
        <taxon>Artiodactyla</taxon>
        <taxon>Ruminantia</taxon>
        <taxon>Pecora</taxon>
        <taxon>Bovidae</taxon>
        <taxon>Bovinae</taxon>
        <taxon>Bos</taxon>
    </lineage>
</organism>
<comment type="function">
    <text evidence="3">Catalyzes the aldol cleavage of fructose 1,6-biphosphate to form two triosephosphates dihydroxyacetone phosphate and D-glyceraldehyde 3-phosphate in glycolysis as well as the reverse stereospecific aldol addition reaction in gluconeogenesis. In fructolysis, metabolizes fructose 1-phosphate derived from the phosphorylation of dietary fructose by fructokinase into dihydroxyacetone phosphate and D-glyceraldehyde (By similarity). Acts as an adapter independently of its enzymatic activity, exerts a tumor suppressor role by stabilizing the ternary complex with G6PD and TP53 to inhibit G6PD activity and keep oxidative pentose phosphate metabolism in check (By similarity).</text>
</comment>
<comment type="catalytic activity">
    <reaction evidence="3">
        <text>beta-D-fructose 1,6-bisphosphate = D-glyceraldehyde 3-phosphate + dihydroxyacetone phosphate</text>
        <dbReference type="Rhea" id="RHEA:14729"/>
        <dbReference type="ChEBI" id="CHEBI:32966"/>
        <dbReference type="ChEBI" id="CHEBI:57642"/>
        <dbReference type="ChEBI" id="CHEBI:59776"/>
        <dbReference type="EC" id="4.1.2.13"/>
    </reaction>
    <physiologicalReaction direction="left-to-right" evidence="3">
        <dbReference type="Rhea" id="RHEA:14730"/>
    </physiologicalReaction>
    <physiologicalReaction direction="right-to-left" evidence="3">
        <dbReference type="Rhea" id="RHEA:14731"/>
    </physiologicalReaction>
</comment>
<comment type="catalytic activity">
    <reaction evidence="3">
        <text>beta-D-fructose 1-phosphate = D-glyceraldehyde + dihydroxyacetone phosphate</text>
        <dbReference type="Rhea" id="RHEA:30851"/>
        <dbReference type="ChEBI" id="CHEBI:17378"/>
        <dbReference type="ChEBI" id="CHEBI:57642"/>
        <dbReference type="ChEBI" id="CHEBI:138881"/>
    </reaction>
    <physiologicalReaction direction="left-to-right" evidence="3">
        <dbReference type="Rhea" id="RHEA:30852"/>
    </physiologicalReaction>
    <physiologicalReaction direction="right-to-left" evidence="3">
        <dbReference type="Rhea" id="RHEA:30853"/>
    </physiologicalReaction>
</comment>
<comment type="pathway">
    <text evidence="3">Carbohydrate degradation; glycolysis; D-glyceraldehyde 3-phosphate and glycerone phosphate from D-glucose: step 4/4.</text>
</comment>
<comment type="pathway">
    <text evidence="3">Carbohydrate biosynthesis; gluconeogenesis.</text>
</comment>
<comment type="pathway">
    <text evidence="3">Carbohydrate metabolism; fructose metabolism.</text>
</comment>
<comment type="subunit">
    <text evidence="3">Homotetramer. Interacts with BBS1, BBS2, BBS4 and BBS7. Forms a ternary complex with G6PD and TP53; this interaction is direct.</text>
</comment>
<comment type="subcellular location">
    <subcellularLocation>
        <location evidence="3">Cytoplasm</location>
        <location evidence="3">Cytosol</location>
    </subcellularLocation>
    <subcellularLocation>
        <location evidence="3">Cytoplasm</location>
        <location evidence="3">Cytoskeleton</location>
        <location evidence="3">Microtubule organizing center</location>
        <location evidence="3">Centrosome</location>
        <location evidence="3">Centriolar satellite</location>
    </subcellularLocation>
</comment>
<comment type="miscellaneous">
    <text>In vertebrates, 3 forms of this ubiquitous glycolytic enzyme are found, aldolase A in muscle, aldolase B in liver and aldolase C in brain.</text>
</comment>
<comment type="similarity">
    <text evidence="5">Belongs to the class I fructose-bisphosphate aldolase family.</text>
</comment>
<evidence type="ECO:0000250" key="1">
    <source>
        <dbReference type="UniProtKB" id="P00883"/>
    </source>
</evidence>
<evidence type="ECO:0000250" key="2">
    <source>
        <dbReference type="UniProtKB" id="P00884"/>
    </source>
</evidence>
<evidence type="ECO:0000250" key="3">
    <source>
        <dbReference type="UniProtKB" id="P05062"/>
    </source>
</evidence>
<evidence type="ECO:0000250" key="4">
    <source>
        <dbReference type="UniProtKB" id="Q91Y97"/>
    </source>
</evidence>
<evidence type="ECO:0000305" key="5"/>
<accession>Q3T0S5</accession>
<proteinExistence type="evidence at transcript level"/>
<name>ALDOB_BOVIN</name>
<reference key="1">
    <citation type="submission" date="2005-08" db="EMBL/GenBank/DDBJ databases">
        <authorList>
            <consortium name="NIH - Mammalian Gene Collection (MGC) project"/>
        </authorList>
    </citation>
    <scope>NUCLEOTIDE SEQUENCE [LARGE SCALE MRNA]</scope>
    <source>
        <strain>Crossbred X Angus</strain>
        <tissue>Ileum</tissue>
    </source>
</reference>
<protein>
    <recommendedName>
        <fullName>Fructose-bisphosphate aldolase B</fullName>
        <ecNumber evidence="3">4.1.2.13</ecNumber>
    </recommendedName>
    <alternativeName>
        <fullName>Liver-type aldolase</fullName>
    </alternativeName>
</protein>
<keyword id="KW-0007">Acetylation</keyword>
<keyword id="KW-0963">Cytoplasm</keyword>
<keyword id="KW-0206">Cytoskeleton</keyword>
<keyword id="KW-0324">Glycolysis</keyword>
<keyword id="KW-0456">Lyase</keyword>
<keyword id="KW-0597">Phosphoprotein</keyword>
<keyword id="KW-1185">Reference proteome</keyword>
<keyword id="KW-0704">Schiff base</keyword>
<feature type="initiator methionine" description="Removed" evidence="4">
    <location>
        <position position="1"/>
    </location>
</feature>
<feature type="chain" id="PRO_0000284089" description="Fructose-bisphosphate aldolase B">
    <location>
        <begin position="2"/>
        <end position="364"/>
    </location>
</feature>
<feature type="active site" description="Proton acceptor" evidence="1">
    <location>
        <position position="188"/>
    </location>
</feature>
<feature type="active site" description="Schiff-base intermediate with dihydroxyacetone-P" evidence="1">
    <location>
        <position position="230"/>
    </location>
</feature>
<feature type="binding site" evidence="1">
    <location>
        <position position="43"/>
    </location>
    <ligand>
        <name>beta-D-fructose 1,6-bisphosphate</name>
        <dbReference type="ChEBI" id="CHEBI:32966"/>
    </ligand>
</feature>
<feature type="binding site" evidence="1">
    <location>
        <begin position="272"/>
        <end position="274"/>
    </location>
    <ligand>
        <name>beta-D-fructose 1,6-bisphosphate</name>
        <dbReference type="ChEBI" id="CHEBI:32966"/>
    </ligand>
</feature>
<feature type="binding site" evidence="1">
    <location>
        <position position="304"/>
    </location>
    <ligand>
        <name>beta-D-fructose 1,6-bisphosphate</name>
        <dbReference type="ChEBI" id="CHEBI:32966"/>
    </ligand>
</feature>
<feature type="site" description="Necessary for preference for fructose 1,6-bisphosphate over fructose 1-phosphate" evidence="1">
    <location>
        <position position="364"/>
    </location>
</feature>
<feature type="modified residue" description="N-acetylalanine" evidence="4">
    <location>
        <position position="2"/>
    </location>
</feature>
<feature type="modified residue" description="N6-succinyllysine" evidence="4">
    <location>
        <position position="13"/>
    </location>
</feature>
<feature type="modified residue" description="Phosphoserine" evidence="3">
    <location>
        <position position="36"/>
    </location>
</feature>
<feature type="modified residue" description="Phosphothreonine" evidence="3">
    <location>
        <position position="39"/>
    </location>
</feature>
<feature type="modified residue" description="Phosphothreonine" evidence="3">
    <location>
        <position position="119"/>
    </location>
</feature>
<feature type="modified residue" description="N6-succinyllysine" evidence="4">
    <location>
        <position position="121"/>
    </location>
</feature>
<feature type="modified residue" description="Phosphoserine" evidence="3">
    <location>
        <position position="132"/>
    </location>
</feature>
<feature type="modified residue" description="Phosphoserine" evidence="3">
    <location>
        <position position="272"/>
    </location>
</feature>
<feature type="modified residue" description="Phosphoserine" evidence="3">
    <location>
        <position position="276"/>
    </location>
</feature>
<feature type="modified residue" description="Phosphoserine" evidence="2">
    <location>
        <position position="299"/>
    </location>
</feature>
<feature type="modified residue" description="Phosphoserine" evidence="2">
    <location>
        <position position="301"/>
    </location>
</feature>
<feature type="modified residue" description="Phosphoserine" evidence="3">
    <location>
        <position position="309"/>
    </location>
</feature>
<feature type="modified residue" description="N6-succinyllysine" evidence="4">
    <location>
        <position position="317"/>
    </location>
</feature>